<sequence length="369" mass="40384">MGEITNVMEYQAIAKQKLPKMIYDYYASGAEDEWTLKENREAFSRILFRPRILIDVSKIDMSATVLGFKISMPIMIAPSAMQKMAHPDGEYATARAASAAGTIMTLSSWATSSVEEVASTGPGIRFFQLYVYKDRNVVEQLVRRAERAGFKAIALTVDTPRLGRREADIKNRFVLPPYLTLKNFEGLDLAEMDKSNDSGLASYVAGQIDRTLSWKDVKWLQSITSLPILVKGVITAEDARLAVHSGAAGIIVSNHGARQLDYVPATISALEEVVTAAAGRIPVYLDGGVRRGTDVFKALALGAAGVFIGRPVVFALAAEGEAGVRNVLRMMREEFELTMALSGCTSLADITRAHIYTDADRLARPFPRL</sequence>
<name>GLO1_ORYSJ</name>
<accession>Q10CE4</accession>
<accession>A0A0P0W4I1</accession>
<protein>
    <recommendedName>
        <fullName>Glycolate oxidase 1</fullName>
        <shortName>GOX 1</shortName>
        <shortName>OsGLO1</shortName>
        <ecNumber evidence="6">1.1.3.15</ecNumber>
    </recommendedName>
    <alternativeName>
        <fullName>Peroxisomal (S)-2-hydroxy-acid oxidase GLO1</fullName>
    </alternativeName>
    <alternativeName>
        <fullName>Short chain alpha-hydroxy acid oxidase GLO1</fullName>
    </alternativeName>
</protein>
<proteinExistence type="evidence at protein level"/>
<comment type="function">
    <text evidence="1 6 8">Catalyzes the oxidation of glycolate to glyoxylate, with a reduction of O2 to H2O2 (PubMed:16595582). Is a key enzyme in photorespiration in plants (By similarity). To a lesser extent, is also able to oxidize glyoxylate to oxalate in vitro (PubMed:16595582). Can exert a strong regulation over photosynthesis, possibly through a feed-back inhibition on Rubisco activase (PubMed:19264754). Does not seem to play a role in oxalate accumulation (PubMed:16595582).</text>
</comment>
<comment type="catalytic activity">
    <reaction evidence="6">
        <text>glycolate + O2 = glyoxylate + H2O2</text>
        <dbReference type="Rhea" id="RHEA:25311"/>
        <dbReference type="ChEBI" id="CHEBI:15379"/>
        <dbReference type="ChEBI" id="CHEBI:16240"/>
        <dbReference type="ChEBI" id="CHEBI:29805"/>
        <dbReference type="ChEBI" id="CHEBI:36655"/>
        <dbReference type="EC" id="1.1.3.15"/>
    </reaction>
    <physiologicalReaction direction="left-to-right" evidence="10">
        <dbReference type="Rhea" id="RHEA:25312"/>
    </physiologicalReaction>
</comment>
<comment type="cofactor">
    <cofactor evidence="2">
        <name>FMN</name>
        <dbReference type="ChEBI" id="CHEBI:58210"/>
    </cofactor>
</comment>
<comment type="activity regulation">
    <text evidence="6">Competitively inhibited by oxalate.</text>
</comment>
<comment type="biophysicochemical properties">
    <kinetics>
        <KM evidence="6">0.4 mM for glycolate (at pH 8.0 and 30 degrees Celsius)</KM>
        <KM evidence="6">4 mM for glyoxylate (at pH 8.0 and 30 degrees Celsius)</KM>
    </kinetics>
</comment>
<comment type="pathway">
    <text evidence="1">Photosynthesis; photorespiration; glycine from 2-phosphoglycolate: step 2/3.</text>
</comment>
<comment type="subunit">
    <text evidence="2 7 9">Homotetramer (By similarity). Interacts with rice dwarf virus (RDV) P8. This interaction promotes viral P8 relocation to virus factories peripheral to peroxisomes. Binds to CATB and CATC; these interactions are disturbed by alpha-hydroxy-2-pyridinemethanesulfonic acid (HPMS) and salicylic acid (SA) (PubMed:26900141).</text>
</comment>
<comment type="subcellular location">
    <subcellularLocation>
        <location evidence="7">Peroxisome</location>
    </subcellularLocation>
</comment>
<comment type="tissue specificity">
    <text evidence="6">Expressed constitutively in leaves (at protein level).</text>
</comment>
<comment type="similarity">
    <text evidence="5">Belongs to the FMN-dependent alpha-hydroxy acid dehydrogenase family.</text>
</comment>
<dbReference type="EC" id="1.1.3.15" evidence="6"/>
<dbReference type="EMBL" id="DP000009">
    <property type="protein sequence ID" value="ABF99231.1"/>
    <property type="molecule type" value="Genomic_DNA"/>
</dbReference>
<dbReference type="EMBL" id="AP008209">
    <property type="protein sequence ID" value="BAF13401.1"/>
    <property type="molecule type" value="Genomic_DNA"/>
</dbReference>
<dbReference type="EMBL" id="AP014959">
    <property type="protein sequence ID" value="BAS86730.1"/>
    <property type="molecule type" value="Genomic_DNA"/>
</dbReference>
<dbReference type="EMBL" id="CM000140">
    <property type="protein sequence ID" value="EEE60058.1"/>
    <property type="molecule type" value="Genomic_DNA"/>
</dbReference>
<dbReference type="EMBL" id="AK098878">
    <property type="protein sequence ID" value="BAG93788.1"/>
    <property type="molecule type" value="mRNA"/>
</dbReference>
<dbReference type="EMBL" id="AK120304">
    <property type="protein sequence ID" value="BAG99960.1"/>
    <property type="molecule type" value="mRNA"/>
</dbReference>
<dbReference type="SMR" id="Q10CE4"/>
<dbReference type="FunCoup" id="Q10CE4">
    <property type="interactions" value="1450"/>
</dbReference>
<dbReference type="STRING" id="39947.Q10CE4"/>
<dbReference type="PaxDb" id="39947-Q10CE4"/>
<dbReference type="EnsemblPlants" id="Os03t0786100-01">
    <property type="protein sequence ID" value="Os03t0786100-01"/>
    <property type="gene ID" value="Os03g0786100"/>
</dbReference>
<dbReference type="EnsemblPlants" id="Os03t0786100-02">
    <property type="protein sequence ID" value="Os03t0786100-02"/>
    <property type="gene ID" value="Os03g0786100"/>
</dbReference>
<dbReference type="Gramene" id="Os03t0786100-01">
    <property type="protein sequence ID" value="Os03t0786100-01"/>
    <property type="gene ID" value="Os03g0786100"/>
</dbReference>
<dbReference type="Gramene" id="Os03t0786100-02">
    <property type="protein sequence ID" value="Os03t0786100-02"/>
    <property type="gene ID" value="Os03g0786100"/>
</dbReference>
<dbReference type="KEGG" id="dosa:Os03g0786100"/>
<dbReference type="eggNOG" id="KOG0538">
    <property type="taxonomic scope" value="Eukaryota"/>
</dbReference>
<dbReference type="HOGENOM" id="CLU_020639_0_0_1"/>
<dbReference type="InParanoid" id="Q10CE4"/>
<dbReference type="OMA" id="CMLADTD"/>
<dbReference type="BRENDA" id="1.1.3.15">
    <property type="organism ID" value="4460"/>
</dbReference>
<dbReference type="PlantReactome" id="R-OSA-1119312">
    <property type="pathway name" value="Photorespiration"/>
</dbReference>
<dbReference type="PlantReactome" id="R-OSA-1119596">
    <property type="pathway name" value="Glutamate biosynthesis I"/>
</dbReference>
<dbReference type="SABIO-RK" id="Q10CE4"/>
<dbReference type="UniPathway" id="UPA00951">
    <property type="reaction ID" value="UER00912"/>
</dbReference>
<dbReference type="Proteomes" id="UP000000763">
    <property type="component" value="Chromosome 3"/>
</dbReference>
<dbReference type="Proteomes" id="UP000007752">
    <property type="component" value="Chromosome 3"/>
</dbReference>
<dbReference type="Proteomes" id="UP000059680">
    <property type="component" value="Chromosome 3"/>
</dbReference>
<dbReference type="GO" id="GO:0005777">
    <property type="term" value="C:peroxisome"/>
    <property type="evidence" value="ECO:0000314"/>
    <property type="project" value="UniProtKB"/>
</dbReference>
<dbReference type="GO" id="GO:0003973">
    <property type="term" value="F:(S)-2-hydroxy-acid oxidase activity"/>
    <property type="evidence" value="ECO:0000314"/>
    <property type="project" value="UniProtKB"/>
</dbReference>
<dbReference type="GO" id="GO:0010181">
    <property type="term" value="F:FMN binding"/>
    <property type="evidence" value="ECO:0007669"/>
    <property type="project" value="InterPro"/>
</dbReference>
<dbReference type="GO" id="GO:0009854">
    <property type="term" value="P:oxidative photosynthetic carbon pathway"/>
    <property type="evidence" value="ECO:0007669"/>
    <property type="project" value="UniProtKB-KW"/>
</dbReference>
<dbReference type="GO" id="GO:0009853">
    <property type="term" value="P:photorespiration"/>
    <property type="evidence" value="ECO:0000315"/>
    <property type="project" value="UniProtKB"/>
</dbReference>
<dbReference type="GO" id="GO:0010109">
    <property type="term" value="P:regulation of photosynthesis"/>
    <property type="evidence" value="ECO:0000315"/>
    <property type="project" value="UniProtKB"/>
</dbReference>
<dbReference type="GO" id="GO:0051707">
    <property type="term" value="P:response to other organism"/>
    <property type="evidence" value="ECO:0007669"/>
    <property type="project" value="UniProtKB-ARBA"/>
</dbReference>
<dbReference type="GO" id="GO:0046718">
    <property type="term" value="P:symbiont entry into host cell"/>
    <property type="evidence" value="ECO:0000353"/>
    <property type="project" value="UniProtKB"/>
</dbReference>
<dbReference type="CDD" id="cd02809">
    <property type="entry name" value="alpha_hydroxyacid_oxid_FMN"/>
    <property type="match status" value="1"/>
</dbReference>
<dbReference type="FunFam" id="3.20.20.70:FF:000063">
    <property type="entry name" value="peroxisomal (S)-2-hydroxy-acid oxidase GLO1"/>
    <property type="match status" value="1"/>
</dbReference>
<dbReference type="Gene3D" id="3.20.20.70">
    <property type="entry name" value="Aldolase class I"/>
    <property type="match status" value="1"/>
</dbReference>
<dbReference type="InterPro" id="IPR013785">
    <property type="entry name" value="Aldolase_TIM"/>
</dbReference>
<dbReference type="InterPro" id="IPR012133">
    <property type="entry name" value="Alpha-hydoxy_acid_DH_FMN"/>
</dbReference>
<dbReference type="InterPro" id="IPR000262">
    <property type="entry name" value="FMN-dep_DH"/>
</dbReference>
<dbReference type="InterPro" id="IPR037396">
    <property type="entry name" value="FMN_HAD"/>
</dbReference>
<dbReference type="InterPro" id="IPR008259">
    <property type="entry name" value="FMN_hydac_DH_AS"/>
</dbReference>
<dbReference type="PANTHER" id="PTHR10578:SF115">
    <property type="entry name" value="GLYCOLATE OXIDASE 1"/>
    <property type="match status" value="1"/>
</dbReference>
<dbReference type="PANTHER" id="PTHR10578">
    <property type="entry name" value="S -2-HYDROXY-ACID OXIDASE-RELATED"/>
    <property type="match status" value="1"/>
</dbReference>
<dbReference type="Pfam" id="PF01070">
    <property type="entry name" value="FMN_dh"/>
    <property type="match status" value="1"/>
</dbReference>
<dbReference type="PIRSF" id="PIRSF000138">
    <property type="entry name" value="Al-hdrx_acd_dh"/>
    <property type="match status" value="1"/>
</dbReference>
<dbReference type="SMART" id="SM01240">
    <property type="entry name" value="IMPDH"/>
    <property type="match status" value="1"/>
</dbReference>
<dbReference type="SUPFAM" id="SSF51395">
    <property type="entry name" value="FMN-linked oxidoreductases"/>
    <property type="match status" value="1"/>
</dbReference>
<dbReference type="PROSITE" id="PS00557">
    <property type="entry name" value="FMN_HYDROXY_ACID_DH_1"/>
    <property type="match status" value="1"/>
</dbReference>
<dbReference type="PROSITE" id="PS51349">
    <property type="entry name" value="FMN_HYDROXY_ACID_DH_2"/>
    <property type="match status" value="1"/>
</dbReference>
<keyword id="KW-0285">Flavoprotein</keyword>
<keyword id="KW-0288">FMN</keyword>
<keyword id="KW-0323">Glycolate pathway</keyword>
<keyword id="KW-0945">Host-virus interaction</keyword>
<keyword id="KW-0560">Oxidoreductase</keyword>
<keyword id="KW-0576">Peroxisome</keyword>
<keyword id="KW-0601">Photorespiration</keyword>
<keyword id="KW-1185">Reference proteome</keyword>
<evidence type="ECO:0000250" key="1">
    <source>
        <dbReference type="UniProtKB" id="A0A3L6E0R4"/>
    </source>
</evidence>
<evidence type="ECO:0000250" key="2">
    <source>
        <dbReference type="UniProtKB" id="P05414"/>
    </source>
</evidence>
<evidence type="ECO:0000250" key="3">
    <source>
        <dbReference type="UniProtKB" id="Q9UJM8"/>
    </source>
</evidence>
<evidence type="ECO:0000255" key="4"/>
<evidence type="ECO:0000255" key="5">
    <source>
        <dbReference type="PROSITE-ProRule" id="PRU00683"/>
    </source>
</evidence>
<evidence type="ECO:0000269" key="6">
    <source>
    </source>
</evidence>
<evidence type="ECO:0000269" key="7">
    <source>
    </source>
</evidence>
<evidence type="ECO:0000269" key="8">
    <source>
    </source>
</evidence>
<evidence type="ECO:0000269" key="9">
    <source>
    </source>
</evidence>
<evidence type="ECO:0000305" key="10">
    <source>
    </source>
</evidence>
<feature type="chain" id="PRO_0000403409" description="Glycolate oxidase 1">
    <location>
        <begin position="1"/>
        <end position="369"/>
    </location>
</feature>
<feature type="domain" description="FMN hydroxy acid dehydrogenase" evidence="5">
    <location>
        <begin position="1"/>
        <end position="360"/>
    </location>
</feature>
<feature type="short sequence motif" description="Microbody targeting signal" evidence="4">
    <location>
        <begin position="367"/>
        <end position="369"/>
    </location>
</feature>
<feature type="active site" description="Proton acceptor" evidence="2">
    <location>
        <position position="255"/>
    </location>
</feature>
<feature type="binding site" evidence="3">
    <location>
        <position position="25"/>
    </location>
    <ligand>
        <name>glyoxylate</name>
        <dbReference type="ChEBI" id="CHEBI:36655"/>
    </ligand>
</feature>
<feature type="binding site" evidence="2">
    <location>
        <begin position="78"/>
        <end position="80"/>
    </location>
    <ligand>
        <name>FMN</name>
        <dbReference type="ChEBI" id="CHEBI:58210"/>
    </ligand>
</feature>
<feature type="binding site" evidence="2">
    <location>
        <position position="107"/>
    </location>
    <ligand>
        <name>FMN</name>
        <dbReference type="ChEBI" id="CHEBI:58210"/>
    </ligand>
</feature>
<feature type="binding site" evidence="2">
    <location>
        <begin position="128"/>
        <end position="130"/>
    </location>
    <ligand>
        <name>FMN</name>
        <dbReference type="ChEBI" id="CHEBI:58210"/>
    </ligand>
</feature>
<feature type="binding site" evidence="3">
    <location>
        <position position="130"/>
    </location>
    <ligand>
        <name>glyoxylate</name>
        <dbReference type="ChEBI" id="CHEBI:36655"/>
    </ligand>
</feature>
<feature type="binding site" evidence="2">
    <location>
        <position position="156"/>
    </location>
    <ligand>
        <name>FMN</name>
        <dbReference type="ChEBI" id="CHEBI:58210"/>
    </ligand>
</feature>
<feature type="binding site" evidence="3">
    <location>
        <position position="165"/>
    </location>
    <ligand>
        <name>glyoxylate</name>
        <dbReference type="ChEBI" id="CHEBI:36655"/>
    </ligand>
</feature>
<feature type="binding site" evidence="2">
    <location>
        <position position="231"/>
    </location>
    <ligand>
        <name>FMN</name>
        <dbReference type="ChEBI" id="CHEBI:58210"/>
    </ligand>
</feature>
<feature type="binding site" evidence="2">
    <location>
        <position position="253"/>
    </location>
    <ligand>
        <name>FMN</name>
        <dbReference type="ChEBI" id="CHEBI:58210"/>
    </ligand>
</feature>
<feature type="binding site" evidence="3">
    <location>
        <position position="255"/>
    </location>
    <ligand>
        <name>glyoxylate</name>
        <dbReference type="ChEBI" id="CHEBI:36655"/>
    </ligand>
</feature>
<feature type="binding site" evidence="3">
    <location>
        <position position="258"/>
    </location>
    <ligand>
        <name>glyoxylate</name>
        <dbReference type="ChEBI" id="CHEBI:36655"/>
    </ligand>
</feature>
<feature type="binding site" evidence="2">
    <location>
        <begin position="286"/>
        <end position="290"/>
    </location>
    <ligand>
        <name>FMN</name>
        <dbReference type="ChEBI" id="CHEBI:58210"/>
    </ligand>
</feature>
<feature type="binding site" evidence="2">
    <location>
        <begin position="309"/>
        <end position="310"/>
    </location>
    <ligand>
        <name>FMN</name>
        <dbReference type="ChEBI" id="CHEBI:58210"/>
    </ligand>
</feature>
<feature type="site" description="Involved in determining the substrate specificity of glycolate oxidase" evidence="2">
    <location>
        <position position="109"/>
    </location>
</feature>
<gene>
    <name type="primary">GLO1</name>
    <name type="synonym">GOX</name>
    <name type="ordered locus">Os03g0786100</name>
    <name type="ordered locus">LOC_Os03g57220</name>
    <name type="ORF">OsJ_12861</name>
</gene>
<organism>
    <name type="scientific">Oryza sativa subsp. japonica</name>
    <name type="common">Rice</name>
    <dbReference type="NCBI Taxonomy" id="39947"/>
    <lineage>
        <taxon>Eukaryota</taxon>
        <taxon>Viridiplantae</taxon>
        <taxon>Streptophyta</taxon>
        <taxon>Embryophyta</taxon>
        <taxon>Tracheophyta</taxon>
        <taxon>Spermatophyta</taxon>
        <taxon>Magnoliopsida</taxon>
        <taxon>Liliopsida</taxon>
        <taxon>Poales</taxon>
        <taxon>Poaceae</taxon>
        <taxon>BOP clade</taxon>
        <taxon>Oryzoideae</taxon>
        <taxon>Oryzeae</taxon>
        <taxon>Oryzinae</taxon>
        <taxon>Oryza</taxon>
        <taxon>Oryza sativa</taxon>
    </lineage>
</organism>
<reference key="1">
    <citation type="journal article" date="2005" name="Genome Res.">
        <title>Sequence, annotation, and analysis of synteny between rice chromosome 3 and diverged grass species.</title>
        <authorList>
            <consortium name="The rice chromosome 3 sequencing consortium"/>
            <person name="Buell C.R."/>
            <person name="Yuan Q."/>
            <person name="Ouyang S."/>
            <person name="Liu J."/>
            <person name="Zhu W."/>
            <person name="Wang A."/>
            <person name="Maiti R."/>
            <person name="Haas B."/>
            <person name="Wortman J."/>
            <person name="Pertea M."/>
            <person name="Jones K.M."/>
            <person name="Kim M."/>
            <person name="Overton L."/>
            <person name="Tsitrin T."/>
            <person name="Fadrosh D."/>
            <person name="Bera J."/>
            <person name="Weaver B."/>
            <person name="Jin S."/>
            <person name="Johri S."/>
            <person name="Reardon M."/>
            <person name="Webb K."/>
            <person name="Hill J."/>
            <person name="Moffat K."/>
            <person name="Tallon L."/>
            <person name="Van Aken S."/>
            <person name="Lewis M."/>
            <person name="Utterback T."/>
            <person name="Feldblyum T."/>
            <person name="Zismann V."/>
            <person name="Iobst S."/>
            <person name="Hsiao J."/>
            <person name="de Vazeille A.R."/>
            <person name="Salzberg S.L."/>
            <person name="White O."/>
            <person name="Fraser C.M."/>
            <person name="Yu Y."/>
            <person name="Kim H."/>
            <person name="Rambo T."/>
            <person name="Currie J."/>
            <person name="Collura K."/>
            <person name="Kernodle-Thompson S."/>
            <person name="Wei F."/>
            <person name="Kudrna K."/>
            <person name="Ammiraju J.S.S."/>
            <person name="Luo M."/>
            <person name="Goicoechea J.L."/>
            <person name="Wing R.A."/>
            <person name="Henry D."/>
            <person name="Oates R."/>
            <person name="Palmer M."/>
            <person name="Pries G."/>
            <person name="Saski C."/>
            <person name="Simmons J."/>
            <person name="Soderlund C."/>
            <person name="Nelson W."/>
            <person name="de la Bastide M."/>
            <person name="Spiegel L."/>
            <person name="Nascimento L."/>
            <person name="Huang E."/>
            <person name="Preston R."/>
            <person name="Zutavern T."/>
            <person name="Palmer L."/>
            <person name="O'Shaughnessy A."/>
            <person name="Dike S."/>
            <person name="McCombie W.R."/>
            <person name="Minx P."/>
            <person name="Cordum H."/>
            <person name="Wilson R."/>
            <person name="Jin W."/>
            <person name="Lee H.R."/>
            <person name="Jiang J."/>
            <person name="Jackson S."/>
        </authorList>
    </citation>
    <scope>NUCLEOTIDE SEQUENCE [LARGE SCALE GENOMIC DNA]</scope>
    <source>
        <strain>cv. Nipponbare</strain>
    </source>
</reference>
<reference key="2">
    <citation type="journal article" date="2005" name="Nature">
        <title>The map-based sequence of the rice genome.</title>
        <authorList>
            <consortium name="International rice genome sequencing project (IRGSP)"/>
        </authorList>
    </citation>
    <scope>NUCLEOTIDE SEQUENCE [LARGE SCALE GENOMIC DNA]</scope>
    <source>
        <strain>cv. Nipponbare</strain>
    </source>
</reference>
<reference key="3">
    <citation type="journal article" date="2008" name="Nucleic Acids Res.">
        <title>The rice annotation project database (RAP-DB): 2008 update.</title>
        <authorList>
            <consortium name="The rice annotation project (RAP)"/>
        </authorList>
    </citation>
    <scope>GENOME REANNOTATION</scope>
    <source>
        <strain>cv. Nipponbare</strain>
    </source>
</reference>
<reference key="4">
    <citation type="journal article" date="2013" name="Rice">
        <title>Improvement of the Oryza sativa Nipponbare reference genome using next generation sequence and optical map data.</title>
        <authorList>
            <person name="Kawahara Y."/>
            <person name="de la Bastide M."/>
            <person name="Hamilton J.P."/>
            <person name="Kanamori H."/>
            <person name="McCombie W.R."/>
            <person name="Ouyang S."/>
            <person name="Schwartz D.C."/>
            <person name="Tanaka T."/>
            <person name="Wu J."/>
            <person name="Zhou S."/>
            <person name="Childs K.L."/>
            <person name="Davidson R.M."/>
            <person name="Lin H."/>
            <person name="Quesada-Ocampo L."/>
            <person name="Vaillancourt B."/>
            <person name="Sakai H."/>
            <person name="Lee S.S."/>
            <person name="Kim J."/>
            <person name="Numa H."/>
            <person name="Itoh T."/>
            <person name="Buell C.R."/>
            <person name="Matsumoto T."/>
        </authorList>
    </citation>
    <scope>GENOME REANNOTATION</scope>
    <source>
        <strain>cv. Nipponbare</strain>
    </source>
</reference>
<reference key="5">
    <citation type="journal article" date="2005" name="PLoS Biol.">
        <title>The genomes of Oryza sativa: a history of duplications.</title>
        <authorList>
            <person name="Yu J."/>
            <person name="Wang J."/>
            <person name="Lin W."/>
            <person name="Li S."/>
            <person name="Li H."/>
            <person name="Zhou J."/>
            <person name="Ni P."/>
            <person name="Dong W."/>
            <person name="Hu S."/>
            <person name="Zeng C."/>
            <person name="Zhang J."/>
            <person name="Zhang Y."/>
            <person name="Li R."/>
            <person name="Xu Z."/>
            <person name="Li S."/>
            <person name="Li X."/>
            <person name="Zheng H."/>
            <person name="Cong L."/>
            <person name="Lin L."/>
            <person name="Yin J."/>
            <person name="Geng J."/>
            <person name="Li G."/>
            <person name="Shi J."/>
            <person name="Liu J."/>
            <person name="Lv H."/>
            <person name="Li J."/>
            <person name="Wang J."/>
            <person name="Deng Y."/>
            <person name="Ran L."/>
            <person name="Shi X."/>
            <person name="Wang X."/>
            <person name="Wu Q."/>
            <person name="Li C."/>
            <person name="Ren X."/>
            <person name="Wang J."/>
            <person name="Wang X."/>
            <person name="Li D."/>
            <person name="Liu D."/>
            <person name="Zhang X."/>
            <person name="Ji Z."/>
            <person name="Zhao W."/>
            <person name="Sun Y."/>
            <person name="Zhang Z."/>
            <person name="Bao J."/>
            <person name="Han Y."/>
            <person name="Dong L."/>
            <person name="Ji J."/>
            <person name="Chen P."/>
            <person name="Wu S."/>
            <person name="Liu J."/>
            <person name="Xiao Y."/>
            <person name="Bu D."/>
            <person name="Tan J."/>
            <person name="Yang L."/>
            <person name="Ye C."/>
            <person name="Zhang J."/>
            <person name="Xu J."/>
            <person name="Zhou Y."/>
            <person name="Yu Y."/>
            <person name="Zhang B."/>
            <person name="Zhuang S."/>
            <person name="Wei H."/>
            <person name="Liu B."/>
            <person name="Lei M."/>
            <person name="Yu H."/>
            <person name="Li Y."/>
            <person name="Xu H."/>
            <person name="Wei S."/>
            <person name="He X."/>
            <person name="Fang L."/>
            <person name="Zhang Z."/>
            <person name="Zhang Y."/>
            <person name="Huang X."/>
            <person name="Su Z."/>
            <person name="Tong W."/>
            <person name="Li J."/>
            <person name="Tong Z."/>
            <person name="Li S."/>
            <person name="Ye J."/>
            <person name="Wang L."/>
            <person name="Fang L."/>
            <person name="Lei T."/>
            <person name="Chen C.-S."/>
            <person name="Chen H.-C."/>
            <person name="Xu Z."/>
            <person name="Li H."/>
            <person name="Huang H."/>
            <person name="Zhang F."/>
            <person name="Xu H."/>
            <person name="Li N."/>
            <person name="Zhao C."/>
            <person name="Li S."/>
            <person name="Dong L."/>
            <person name="Huang Y."/>
            <person name="Li L."/>
            <person name="Xi Y."/>
            <person name="Qi Q."/>
            <person name="Li W."/>
            <person name="Zhang B."/>
            <person name="Hu W."/>
            <person name="Zhang Y."/>
            <person name="Tian X."/>
            <person name="Jiao Y."/>
            <person name="Liang X."/>
            <person name="Jin J."/>
            <person name="Gao L."/>
            <person name="Zheng W."/>
            <person name="Hao B."/>
            <person name="Liu S.-M."/>
            <person name="Wang W."/>
            <person name="Yuan L."/>
            <person name="Cao M."/>
            <person name="McDermott J."/>
            <person name="Samudrala R."/>
            <person name="Wang J."/>
            <person name="Wong G.K.-S."/>
            <person name="Yang H."/>
        </authorList>
    </citation>
    <scope>NUCLEOTIDE SEQUENCE [LARGE SCALE GENOMIC DNA]</scope>
    <source>
        <strain>cv. Nipponbare</strain>
    </source>
</reference>
<reference key="6">
    <citation type="journal article" date="2003" name="Science">
        <title>Collection, mapping, and annotation of over 28,000 cDNA clones from japonica rice.</title>
        <authorList>
            <consortium name="The rice full-length cDNA consortium"/>
        </authorList>
    </citation>
    <scope>NUCLEOTIDE SEQUENCE [LARGE SCALE MRNA]</scope>
    <source>
        <strain>cv. Nipponbare</strain>
    </source>
</reference>
<reference key="7">
    <citation type="journal article" date="2006" name="J. Exp. Bot.">
        <title>Oxalate accumulation and regulation is independent of glycolate oxidase in rice leaves.</title>
        <authorList>
            <person name="Xu H.-W."/>
            <person name="Ji X.-M."/>
            <person name="He Z.-H."/>
            <person name="Shi W.-P."/>
            <person name="Zhu G.-H."/>
            <person name="Niu J.-K."/>
            <person name="Li B.-S."/>
            <person name="Peng X.-X."/>
        </authorList>
    </citation>
    <scope>TISSUE SPECIFICITY</scope>
    <scope>BIOPHYSICOCHEMICAL PROPERTIES</scope>
    <scope>CATALYTIC ACTIVITY</scope>
    <scope>FUNCTION</scope>
    <scope>ACTIVITY REGULATION</scope>
    <source>
        <strain>cv. Shishoubaimao</strain>
        <strain>cv. Xiangzhongxian 2</strain>
    </source>
</reference>
<reference key="8">
    <citation type="journal article" date="2007" name="FEBS Lett.">
        <title>Interaction of rice dwarf virus outer capsid P8 protein with rice glycolate oxidase mediates relocalization of P8.</title>
        <authorList>
            <person name="Zhou F."/>
            <person name="Wu G."/>
            <person name="Deng W."/>
            <person name="Pu Y."/>
            <person name="Wei C."/>
            <person name="Li Y."/>
        </authorList>
    </citation>
    <scope>INTERACTION WITH RICE DWARF VIRUS P8</scope>
    <scope>SUBCELLULAR LOCATION</scope>
    <source>
        <strain>cv. Xiushui 11</strain>
    </source>
</reference>
<reference key="9">
    <citation type="journal article" date="2009" name="J. Exp. Bot.">
        <title>Inducible antisense suppression of glycolate oxidase reveals its strong regulation over photosynthesis in rice.</title>
        <authorList>
            <person name="Xu H.-W."/>
            <person name="Zhang J."/>
            <person name="Zeng J."/>
            <person name="Jiang L."/>
            <person name="Liu E."/>
            <person name="Peng C."/>
            <person name="He Z.-H."/>
            <person name="Peng X.-X."/>
        </authorList>
    </citation>
    <scope>FUNCTION</scope>
    <scope>GENE FAMILY</scope>
    <scope>NOMENCLATURE</scope>
    <source>
        <strain>cv. Shishoubaimao</strain>
    </source>
</reference>
<reference key="10">
    <citation type="journal article" date="2016" name="Mol. Plant">
        <title>Association-dissociation of glycolate oxidase with catalase in rice: a potential switch to modulate intracellular H2O2 levels.</title>
        <authorList>
            <person name="Zhang Z."/>
            <person name="Xu Y."/>
            <person name="Xie Z."/>
            <person name="Li X."/>
            <person name="He Z.-H."/>
            <person name="Peng X.-X."/>
        </authorList>
    </citation>
    <scope>INTERACTION WITH CATB AND CATC</scope>
    <source>
        <strain>cv. Zhonghua 11</strain>
    </source>
</reference>